<proteinExistence type="inferred from homology"/>
<protein>
    <recommendedName>
        <fullName evidence="1">Lipoyl synthase</fullName>
        <ecNumber evidence="1">2.8.1.8</ecNumber>
    </recommendedName>
    <alternativeName>
        <fullName evidence="1">Lip-syn</fullName>
        <shortName evidence="1">LS</shortName>
    </alternativeName>
    <alternativeName>
        <fullName evidence="1">Lipoate synthase</fullName>
    </alternativeName>
    <alternativeName>
        <fullName evidence="1">Lipoic acid synthase</fullName>
    </alternativeName>
    <alternativeName>
        <fullName evidence="1">Sulfur insertion protein LipA</fullName>
    </alternativeName>
</protein>
<feature type="chain" id="PRO_1000012230" description="Lipoyl synthase">
    <location>
        <begin position="1"/>
        <end position="321"/>
    </location>
</feature>
<feature type="domain" description="Radical SAM core" evidence="2">
    <location>
        <begin position="80"/>
        <end position="297"/>
    </location>
</feature>
<feature type="binding site" evidence="1">
    <location>
        <position position="68"/>
    </location>
    <ligand>
        <name>[4Fe-4S] cluster</name>
        <dbReference type="ChEBI" id="CHEBI:49883"/>
        <label>1</label>
    </ligand>
</feature>
<feature type="binding site" evidence="1">
    <location>
        <position position="73"/>
    </location>
    <ligand>
        <name>[4Fe-4S] cluster</name>
        <dbReference type="ChEBI" id="CHEBI:49883"/>
        <label>1</label>
    </ligand>
</feature>
<feature type="binding site" evidence="1">
    <location>
        <position position="79"/>
    </location>
    <ligand>
        <name>[4Fe-4S] cluster</name>
        <dbReference type="ChEBI" id="CHEBI:49883"/>
        <label>1</label>
    </ligand>
</feature>
<feature type="binding site" evidence="1">
    <location>
        <position position="94"/>
    </location>
    <ligand>
        <name>[4Fe-4S] cluster</name>
        <dbReference type="ChEBI" id="CHEBI:49883"/>
        <label>2</label>
        <note>4Fe-4S-S-AdoMet</note>
    </ligand>
</feature>
<feature type="binding site" evidence="1">
    <location>
        <position position="98"/>
    </location>
    <ligand>
        <name>[4Fe-4S] cluster</name>
        <dbReference type="ChEBI" id="CHEBI:49883"/>
        <label>2</label>
        <note>4Fe-4S-S-AdoMet</note>
    </ligand>
</feature>
<feature type="binding site" evidence="1">
    <location>
        <position position="101"/>
    </location>
    <ligand>
        <name>[4Fe-4S] cluster</name>
        <dbReference type="ChEBI" id="CHEBI:49883"/>
        <label>2</label>
        <note>4Fe-4S-S-AdoMet</note>
    </ligand>
</feature>
<feature type="binding site" evidence="1">
    <location>
        <position position="308"/>
    </location>
    <ligand>
        <name>[4Fe-4S] cluster</name>
        <dbReference type="ChEBI" id="CHEBI:49883"/>
        <label>1</label>
    </ligand>
</feature>
<accession>A6T689</accession>
<keyword id="KW-0004">4Fe-4S</keyword>
<keyword id="KW-0963">Cytoplasm</keyword>
<keyword id="KW-0408">Iron</keyword>
<keyword id="KW-0411">Iron-sulfur</keyword>
<keyword id="KW-0479">Metal-binding</keyword>
<keyword id="KW-0949">S-adenosyl-L-methionine</keyword>
<keyword id="KW-0808">Transferase</keyword>
<organism>
    <name type="scientific">Klebsiella pneumoniae subsp. pneumoniae (strain ATCC 700721 / MGH 78578)</name>
    <dbReference type="NCBI Taxonomy" id="272620"/>
    <lineage>
        <taxon>Bacteria</taxon>
        <taxon>Pseudomonadati</taxon>
        <taxon>Pseudomonadota</taxon>
        <taxon>Gammaproteobacteria</taxon>
        <taxon>Enterobacterales</taxon>
        <taxon>Enterobacteriaceae</taxon>
        <taxon>Klebsiella/Raoultella group</taxon>
        <taxon>Klebsiella</taxon>
        <taxon>Klebsiella pneumoniae complex</taxon>
    </lineage>
</organism>
<comment type="function">
    <text evidence="1">Catalyzes the radical-mediated insertion of two sulfur atoms into the C-6 and C-8 positions of the octanoyl moiety bound to the lipoyl domains of lipoate-dependent enzymes, thereby converting the octanoylated domains into lipoylated derivatives.</text>
</comment>
<comment type="catalytic activity">
    <reaction evidence="1">
        <text>[[Fe-S] cluster scaffold protein carrying a second [4Fe-4S](2+) cluster] + N(6)-octanoyl-L-lysyl-[protein] + 2 oxidized [2Fe-2S]-[ferredoxin] + 2 S-adenosyl-L-methionine + 4 H(+) = [[Fe-S] cluster scaffold protein] + N(6)-[(R)-dihydrolipoyl]-L-lysyl-[protein] + 4 Fe(3+) + 2 hydrogen sulfide + 2 5'-deoxyadenosine + 2 L-methionine + 2 reduced [2Fe-2S]-[ferredoxin]</text>
        <dbReference type="Rhea" id="RHEA:16585"/>
        <dbReference type="Rhea" id="RHEA-COMP:9928"/>
        <dbReference type="Rhea" id="RHEA-COMP:10000"/>
        <dbReference type="Rhea" id="RHEA-COMP:10001"/>
        <dbReference type="Rhea" id="RHEA-COMP:10475"/>
        <dbReference type="Rhea" id="RHEA-COMP:14568"/>
        <dbReference type="Rhea" id="RHEA-COMP:14569"/>
        <dbReference type="ChEBI" id="CHEBI:15378"/>
        <dbReference type="ChEBI" id="CHEBI:17319"/>
        <dbReference type="ChEBI" id="CHEBI:29034"/>
        <dbReference type="ChEBI" id="CHEBI:29919"/>
        <dbReference type="ChEBI" id="CHEBI:33722"/>
        <dbReference type="ChEBI" id="CHEBI:33737"/>
        <dbReference type="ChEBI" id="CHEBI:33738"/>
        <dbReference type="ChEBI" id="CHEBI:57844"/>
        <dbReference type="ChEBI" id="CHEBI:59789"/>
        <dbReference type="ChEBI" id="CHEBI:78809"/>
        <dbReference type="ChEBI" id="CHEBI:83100"/>
        <dbReference type="EC" id="2.8.1.8"/>
    </reaction>
</comment>
<comment type="cofactor">
    <cofactor evidence="1">
        <name>[4Fe-4S] cluster</name>
        <dbReference type="ChEBI" id="CHEBI:49883"/>
    </cofactor>
    <text evidence="1">Binds 2 [4Fe-4S] clusters per subunit. One cluster is coordinated with 3 cysteines and an exchangeable S-adenosyl-L-methionine.</text>
</comment>
<comment type="pathway">
    <text evidence="1">Protein modification; protein lipoylation via endogenous pathway; protein N(6)-(lipoyl)lysine from octanoyl-[acyl-carrier-protein]: step 2/2.</text>
</comment>
<comment type="subcellular location">
    <subcellularLocation>
        <location evidence="1">Cytoplasm</location>
    </subcellularLocation>
</comment>
<comment type="similarity">
    <text evidence="1">Belongs to the radical SAM superfamily. Lipoyl synthase family.</text>
</comment>
<evidence type="ECO:0000255" key="1">
    <source>
        <dbReference type="HAMAP-Rule" id="MF_00206"/>
    </source>
</evidence>
<evidence type="ECO:0000255" key="2">
    <source>
        <dbReference type="PROSITE-ProRule" id="PRU01266"/>
    </source>
</evidence>
<reference key="1">
    <citation type="submission" date="2006-09" db="EMBL/GenBank/DDBJ databases">
        <authorList>
            <consortium name="The Klebsiella pneumonia Genome Sequencing Project"/>
            <person name="McClelland M."/>
            <person name="Sanderson E.K."/>
            <person name="Spieth J."/>
            <person name="Clifton W.S."/>
            <person name="Latreille P."/>
            <person name="Sabo A."/>
            <person name="Pepin K."/>
            <person name="Bhonagiri V."/>
            <person name="Porwollik S."/>
            <person name="Ali J."/>
            <person name="Wilson R.K."/>
        </authorList>
    </citation>
    <scope>NUCLEOTIDE SEQUENCE [LARGE SCALE GENOMIC DNA]</scope>
    <source>
        <strain>ATCC 700721 / MGH 78578</strain>
    </source>
</reference>
<name>LIPA_KLEP7</name>
<gene>
    <name evidence="1" type="primary">lipA</name>
    <name type="ordered locus">KPN78578_06490</name>
    <name type="ORF">KPN_00660</name>
</gene>
<dbReference type="EC" id="2.8.1.8" evidence="1"/>
<dbReference type="EMBL" id="CP000647">
    <property type="protein sequence ID" value="ABR76110.1"/>
    <property type="molecule type" value="Genomic_DNA"/>
</dbReference>
<dbReference type="RefSeq" id="WP_002894467.1">
    <property type="nucleotide sequence ID" value="NC_009648.1"/>
</dbReference>
<dbReference type="SMR" id="A6T689"/>
<dbReference type="STRING" id="272620.KPN_00660"/>
<dbReference type="jPOST" id="A6T689"/>
<dbReference type="PaxDb" id="272620-KPN_00660"/>
<dbReference type="EnsemblBacteria" id="ABR76110">
    <property type="protein sequence ID" value="ABR76110"/>
    <property type="gene ID" value="KPN_00660"/>
</dbReference>
<dbReference type="GeneID" id="93274417"/>
<dbReference type="KEGG" id="kpn:KPN_00660"/>
<dbReference type="HOGENOM" id="CLU_033144_2_1_6"/>
<dbReference type="UniPathway" id="UPA00538">
    <property type="reaction ID" value="UER00593"/>
</dbReference>
<dbReference type="Proteomes" id="UP000000265">
    <property type="component" value="Chromosome"/>
</dbReference>
<dbReference type="GO" id="GO:0005737">
    <property type="term" value="C:cytoplasm"/>
    <property type="evidence" value="ECO:0007669"/>
    <property type="project" value="UniProtKB-SubCell"/>
</dbReference>
<dbReference type="GO" id="GO:0051539">
    <property type="term" value="F:4 iron, 4 sulfur cluster binding"/>
    <property type="evidence" value="ECO:0007669"/>
    <property type="project" value="UniProtKB-UniRule"/>
</dbReference>
<dbReference type="GO" id="GO:0016992">
    <property type="term" value="F:lipoate synthase activity"/>
    <property type="evidence" value="ECO:0007669"/>
    <property type="project" value="UniProtKB-UniRule"/>
</dbReference>
<dbReference type="GO" id="GO:0046872">
    <property type="term" value="F:metal ion binding"/>
    <property type="evidence" value="ECO:0007669"/>
    <property type="project" value="UniProtKB-KW"/>
</dbReference>
<dbReference type="CDD" id="cd01335">
    <property type="entry name" value="Radical_SAM"/>
    <property type="match status" value="1"/>
</dbReference>
<dbReference type="FunFam" id="3.20.20.70:FF:000023">
    <property type="entry name" value="Lipoyl synthase"/>
    <property type="match status" value="1"/>
</dbReference>
<dbReference type="Gene3D" id="3.20.20.70">
    <property type="entry name" value="Aldolase class I"/>
    <property type="match status" value="1"/>
</dbReference>
<dbReference type="HAMAP" id="MF_00206">
    <property type="entry name" value="Lipoyl_synth"/>
    <property type="match status" value="1"/>
</dbReference>
<dbReference type="InterPro" id="IPR013785">
    <property type="entry name" value="Aldolase_TIM"/>
</dbReference>
<dbReference type="InterPro" id="IPR006638">
    <property type="entry name" value="Elp3/MiaA/NifB-like_rSAM"/>
</dbReference>
<dbReference type="InterPro" id="IPR031691">
    <property type="entry name" value="LIAS_N"/>
</dbReference>
<dbReference type="InterPro" id="IPR003698">
    <property type="entry name" value="Lipoyl_synth"/>
</dbReference>
<dbReference type="InterPro" id="IPR007197">
    <property type="entry name" value="rSAM"/>
</dbReference>
<dbReference type="NCBIfam" id="TIGR00510">
    <property type="entry name" value="lipA"/>
    <property type="match status" value="1"/>
</dbReference>
<dbReference type="NCBIfam" id="NF004019">
    <property type="entry name" value="PRK05481.1"/>
    <property type="match status" value="1"/>
</dbReference>
<dbReference type="NCBIfam" id="NF009544">
    <property type="entry name" value="PRK12928.1"/>
    <property type="match status" value="1"/>
</dbReference>
<dbReference type="PANTHER" id="PTHR10949">
    <property type="entry name" value="LIPOYL SYNTHASE"/>
    <property type="match status" value="1"/>
</dbReference>
<dbReference type="PANTHER" id="PTHR10949:SF0">
    <property type="entry name" value="LIPOYL SYNTHASE, MITOCHONDRIAL"/>
    <property type="match status" value="1"/>
</dbReference>
<dbReference type="Pfam" id="PF16881">
    <property type="entry name" value="LIAS_N"/>
    <property type="match status" value="1"/>
</dbReference>
<dbReference type="Pfam" id="PF04055">
    <property type="entry name" value="Radical_SAM"/>
    <property type="match status" value="1"/>
</dbReference>
<dbReference type="PIRSF" id="PIRSF005963">
    <property type="entry name" value="Lipoyl_synth"/>
    <property type="match status" value="1"/>
</dbReference>
<dbReference type="SFLD" id="SFLDF00271">
    <property type="entry name" value="lipoyl_synthase"/>
    <property type="match status" value="1"/>
</dbReference>
<dbReference type="SFLD" id="SFLDG01058">
    <property type="entry name" value="lipoyl_synthase_like"/>
    <property type="match status" value="1"/>
</dbReference>
<dbReference type="SMART" id="SM00729">
    <property type="entry name" value="Elp3"/>
    <property type="match status" value="1"/>
</dbReference>
<dbReference type="SUPFAM" id="SSF102114">
    <property type="entry name" value="Radical SAM enzymes"/>
    <property type="match status" value="1"/>
</dbReference>
<dbReference type="PROSITE" id="PS51918">
    <property type="entry name" value="RADICAL_SAM"/>
    <property type="match status" value="1"/>
</dbReference>
<sequence>MSKPIVMERGVKYRDADKMALIPVKNVATEREALLRKPEWMKIKLPADSSRIQGIKAAMRKNGLHSVCEEASCPNLAECFNHGTATFMILGAICTRRCPFCDVAHGRPVAPDANEPQKLAQTIADMGLRYVVVTSVDRDDLRDGGAQHFADCISAIREKNPSIKIETLVPDFRGRMDRALDILTVTPPDVFNHNLENVPRLYRQVRPGADYNWSLKLLERFKEAHPEIPTKSGLMVGLGETNDEIIEVMRDLRRHGVTMLTLGQYLQPSRHHLPVQRYVSPEEFEEMKAEAMAMGFTHAACGPFVRSSYHADLQAKGMEVK</sequence>